<proteinExistence type="inferred from homology"/>
<protein>
    <recommendedName>
        <fullName>Eukaryotic translation initiation factor 5</fullName>
        <shortName>eIF-5</shortName>
    </recommendedName>
</protein>
<reference key="1">
    <citation type="journal article" date="2005" name="Nature">
        <title>The genome of the social amoeba Dictyostelium discoideum.</title>
        <authorList>
            <person name="Eichinger L."/>
            <person name="Pachebat J.A."/>
            <person name="Gloeckner G."/>
            <person name="Rajandream M.A."/>
            <person name="Sucgang R."/>
            <person name="Berriman M."/>
            <person name="Song J."/>
            <person name="Olsen R."/>
            <person name="Szafranski K."/>
            <person name="Xu Q."/>
            <person name="Tunggal B."/>
            <person name="Kummerfeld S."/>
            <person name="Madera M."/>
            <person name="Konfortov B.A."/>
            <person name="Rivero F."/>
            <person name="Bankier A.T."/>
            <person name="Lehmann R."/>
            <person name="Hamlin N."/>
            <person name="Davies R."/>
            <person name="Gaudet P."/>
            <person name="Fey P."/>
            <person name="Pilcher K."/>
            <person name="Chen G."/>
            <person name="Saunders D."/>
            <person name="Sodergren E.J."/>
            <person name="Davis P."/>
            <person name="Kerhornou A."/>
            <person name="Nie X."/>
            <person name="Hall N."/>
            <person name="Anjard C."/>
            <person name="Hemphill L."/>
            <person name="Bason N."/>
            <person name="Farbrother P."/>
            <person name="Desany B."/>
            <person name="Just E."/>
            <person name="Morio T."/>
            <person name="Rost R."/>
            <person name="Churcher C.M."/>
            <person name="Cooper J."/>
            <person name="Haydock S."/>
            <person name="van Driessche N."/>
            <person name="Cronin A."/>
            <person name="Goodhead I."/>
            <person name="Muzny D.M."/>
            <person name="Mourier T."/>
            <person name="Pain A."/>
            <person name="Lu M."/>
            <person name="Harper D."/>
            <person name="Lindsay R."/>
            <person name="Hauser H."/>
            <person name="James K.D."/>
            <person name="Quiles M."/>
            <person name="Madan Babu M."/>
            <person name="Saito T."/>
            <person name="Buchrieser C."/>
            <person name="Wardroper A."/>
            <person name="Felder M."/>
            <person name="Thangavelu M."/>
            <person name="Johnson D."/>
            <person name="Knights A."/>
            <person name="Loulseged H."/>
            <person name="Mungall K.L."/>
            <person name="Oliver K."/>
            <person name="Price C."/>
            <person name="Quail M.A."/>
            <person name="Urushihara H."/>
            <person name="Hernandez J."/>
            <person name="Rabbinowitsch E."/>
            <person name="Steffen D."/>
            <person name="Sanders M."/>
            <person name="Ma J."/>
            <person name="Kohara Y."/>
            <person name="Sharp S."/>
            <person name="Simmonds M.N."/>
            <person name="Spiegler S."/>
            <person name="Tivey A."/>
            <person name="Sugano S."/>
            <person name="White B."/>
            <person name="Walker D."/>
            <person name="Woodward J.R."/>
            <person name="Winckler T."/>
            <person name="Tanaka Y."/>
            <person name="Shaulsky G."/>
            <person name="Schleicher M."/>
            <person name="Weinstock G.M."/>
            <person name="Rosenthal A."/>
            <person name="Cox E.C."/>
            <person name="Chisholm R.L."/>
            <person name="Gibbs R.A."/>
            <person name="Loomis W.F."/>
            <person name="Platzer M."/>
            <person name="Kay R.R."/>
            <person name="Williams J.G."/>
            <person name="Dear P.H."/>
            <person name="Noegel A.A."/>
            <person name="Barrell B.G."/>
            <person name="Kuspa A."/>
        </authorList>
    </citation>
    <scope>NUCLEOTIDE SEQUENCE [LARGE SCALE GENOMIC DNA]</scope>
    <source>
        <strain>AX4</strain>
    </source>
</reference>
<keyword id="KW-0342">GTP-binding</keyword>
<keyword id="KW-0396">Initiation factor</keyword>
<keyword id="KW-0547">Nucleotide-binding</keyword>
<keyword id="KW-0648">Protein biosynthesis</keyword>
<keyword id="KW-1185">Reference proteome</keyword>
<comment type="function">
    <text evidence="1">Catalyzes the hydrolysis of GTP bound to the 40S ribosomal initiation complex (40S.mRNA.Met-tRNA[F].eIF-2.GTP) with the subsequent joining of a 60S ribosomal subunit resulting in the release of eIF-2 and the guanine nucleotide. The subsequent joining of a 60S ribosomal subunit results in the formation of a functional 80S initiation complex (80S.mRNA.Met-tRNA[F]) (By similarity).</text>
</comment>
<comment type="similarity">
    <text evidence="5">Belongs to the eIF-2-beta/eIF-5 family.</text>
</comment>
<sequence length="393" mass="44570">MAQVNIRRDVEDQFYRYKMEVLQGKVEGKGNGIKTVIVNLPNIARDLDRQPEYITKFFEIEFNAKSNIENEKYSINGQYTVERLASALDKFISKFVLCSFCKNPETKFVIKKGVIEFKCAACGRVGPIDMKHKLTSYIVKNPPKAVSTKSTHDEALAQQPQIKKEKKSKKKKDDDDEEDDVVWFTDTSEKAAEERKKKAIGDSTSAVISMMADISVEPQSAKEEQDEDDEQEEGQEKESDPVSSISSFLETNPADQELMEKLDSVQEEFGLRSSATSKAAIEALCKNAENTIKFVKTQTALLKKISKRRDGKLGILLGFEELCVKDETLLKSIQGILKNLFDAGILTEENILKWYHQKAKSKVVIKACKDFIAWLETAEEEEEDEEEDEEDDS</sequence>
<feature type="chain" id="PRO_0000331244" description="Eukaryotic translation initiation factor 5">
    <location>
        <begin position="1"/>
        <end position="393"/>
    </location>
</feature>
<feature type="domain" description="W2" evidence="3">
    <location>
        <begin position="223"/>
        <end position="385"/>
    </location>
</feature>
<feature type="region of interest" description="Disordered" evidence="4">
    <location>
        <begin position="144"/>
        <end position="179"/>
    </location>
</feature>
<feature type="region of interest" description="Disordered" evidence="4">
    <location>
        <begin position="217"/>
        <end position="247"/>
    </location>
</feature>
<feature type="compositionally biased region" description="Acidic residues" evidence="4">
    <location>
        <begin position="224"/>
        <end position="233"/>
    </location>
</feature>
<feature type="binding site" evidence="2">
    <location>
        <begin position="28"/>
        <end position="35"/>
    </location>
    <ligand>
        <name>GTP</name>
        <dbReference type="ChEBI" id="CHEBI:37565"/>
    </ligand>
</feature>
<dbReference type="EMBL" id="AAFI02000089">
    <property type="protein sequence ID" value="EAL64132.1"/>
    <property type="molecule type" value="Genomic_DNA"/>
</dbReference>
<dbReference type="RefSeq" id="XP_637660.1">
    <property type="nucleotide sequence ID" value="XM_632568.1"/>
</dbReference>
<dbReference type="SMR" id="Q54LA1"/>
<dbReference type="FunCoup" id="Q54LA1">
    <property type="interactions" value="890"/>
</dbReference>
<dbReference type="STRING" id="44689.Q54LA1"/>
<dbReference type="PaxDb" id="44689-DDB0234258"/>
<dbReference type="EnsemblProtists" id="EAL64132">
    <property type="protein sequence ID" value="EAL64132"/>
    <property type="gene ID" value="DDB_G0286753"/>
</dbReference>
<dbReference type="GeneID" id="8625800"/>
<dbReference type="KEGG" id="ddi:DDB_G0286753"/>
<dbReference type="dictyBase" id="DDB_G0286753">
    <property type="gene designation" value="eIF5"/>
</dbReference>
<dbReference type="VEuPathDB" id="AmoebaDB:DDB_G0286753"/>
<dbReference type="eggNOG" id="KOG2767">
    <property type="taxonomic scope" value="Eukaryota"/>
</dbReference>
<dbReference type="HOGENOM" id="CLU_026663_1_0_1"/>
<dbReference type="InParanoid" id="Q54LA1"/>
<dbReference type="OMA" id="MLNLKCA"/>
<dbReference type="PhylomeDB" id="Q54LA1"/>
<dbReference type="Reactome" id="R-DDI-72702">
    <property type="pathway name" value="Ribosomal scanning and start codon recognition"/>
</dbReference>
<dbReference type="PRO" id="PR:Q54LA1"/>
<dbReference type="Proteomes" id="UP000002195">
    <property type="component" value="Chromosome 4"/>
</dbReference>
<dbReference type="GO" id="GO:0005829">
    <property type="term" value="C:cytosol"/>
    <property type="evidence" value="ECO:0000250"/>
    <property type="project" value="dictyBase"/>
</dbReference>
<dbReference type="GO" id="GO:0071074">
    <property type="term" value="F:eukaryotic initiation factor eIF2 binding"/>
    <property type="evidence" value="ECO:0000318"/>
    <property type="project" value="GO_Central"/>
</dbReference>
<dbReference type="GO" id="GO:0005092">
    <property type="term" value="F:GDP-dissociation inhibitor activity"/>
    <property type="evidence" value="ECO:0000318"/>
    <property type="project" value="GO_Central"/>
</dbReference>
<dbReference type="GO" id="GO:0005525">
    <property type="term" value="F:GTP binding"/>
    <property type="evidence" value="ECO:0007669"/>
    <property type="project" value="UniProtKB-KW"/>
</dbReference>
<dbReference type="GO" id="GO:0003743">
    <property type="term" value="F:translation initiation factor activity"/>
    <property type="evidence" value="ECO:0000318"/>
    <property type="project" value="GO_Central"/>
</dbReference>
<dbReference type="GO" id="GO:0001732">
    <property type="term" value="P:formation of cytoplasmic translation initiation complex"/>
    <property type="evidence" value="ECO:0000318"/>
    <property type="project" value="GO_Central"/>
</dbReference>
<dbReference type="CDD" id="cd11561">
    <property type="entry name" value="W2_eIF5"/>
    <property type="match status" value="1"/>
</dbReference>
<dbReference type="FunFam" id="1.25.40.180:FF:000212">
    <property type="match status" value="1"/>
</dbReference>
<dbReference type="FunFam" id="2.20.25.350:FF:000001">
    <property type="entry name" value="Eukaryotic translation initiation factor 5"/>
    <property type="match status" value="1"/>
</dbReference>
<dbReference type="FunFam" id="3.30.30.170:FF:000004">
    <property type="entry name" value="Eukaryotic translation initiation factor eif-5, putative"/>
    <property type="match status" value="1"/>
</dbReference>
<dbReference type="Gene3D" id="1.25.40.180">
    <property type="match status" value="1"/>
</dbReference>
<dbReference type="Gene3D" id="2.20.25.350">
    <property type="match status" value="1"/>
</dbReference>
<dbReference type="Gene3D" id="3.30.30.170">
    <property type="match status" value="1"/>
</dbReference>
<dbReference type="InterPro" id="IPR016024">
    <property type="entry name" value="ARM-type_fold"/>
</dbReference>
<dbReference type="InterPro" id="IPR045196">
    <property type="entry name" value="IF2/IF5"/>
</dbReference>
<dbReference type="InterPro" id="IPR002735">
    <property type="entry name" value="Transl_init_fac_IF2/IF5_dom"/>
</dbReference>
<dbReference type="InterPro" id="IPR016189">
    <property type="entry name" value="Transl_init_fac_IF2/IF5_N"/>
</dbReference>
<dbReference type="InterPro" id="IPR016190">
    <property type="entry name" value="Transl_init_fac_IF2/IF5_Zn-bd"/>
</dbReference>
<dbReference type="InterPro" id="IPR003307">
    <property type="entry name" value="W2_domain"/>
</dbReference>
<dbReference type="PANTHER" id="PTHR23001">
    <property type="entry name" value="EUKARYOTIC TRANSLATION INITIATION FACTOR"/>
    <property type="match status" value="1"/>
</dbReference>
<dbReference type="PANTHER" id="PTHR23001:SF7">
    <property type="entry name" value="EUKARYOTIC TRANSLATION INITIATION FACTOR 5"/>
    <property type="match status" value="1"/>
</dbReference>
<dbReference type="Pfam" id="PF01873">
    <property type="entry name" value="eIF-5_eIF-2B"/>
    <property type="match status" value="1"/>
</dbReference>
<dbReference type="Pfam" id="PF02020">
    <property type="entry name" value="W2"/>
    <property type="match status" value="1"/>
</dbReference>
<dbReference type="SMART" id="SM00653">
    <property type="entry name" value="eIF2B_5"/>
    <property type="match status" value="1"/>
</dbReference>
<dbReference type="SMART" id="SM00515">
    <property type="entry name" value="eIF5C"/>
    <property type="match status" value="1"/>
</dbReference>
<dbReference type="SUPFAM" id="SSF48371">
    <property type="entry name" value="ARM repeat"/>
    <property type="match status" value="1"/>
</dbReference>
<dbReference type="SUPFAM" id="SSF100966">
    <property type="entry name" value="Translation initiation factor 2 beta, aIF2beta, N-terminal domain"/>
    <property type="match status" value="1"/>
</dbReference>
<dbReference type="SUPFAM" id="SSF75689">
    <property type="entry name" value="Zinc-binding domain of translation initiation factor 2 beta"/>
    <property type="match status" value="1"/>
</dbReference>
<dbReference type="PROSITE" id="PS51363">
    <property type="entry name" value="W2"/>
    <property type="match status" value="1"/>
</dbReference>
<accession>Q54LA1</accession>
<gene>
    <name type="primary">eif5</name>
    <name type="ORF">DDB_G0286753</name>
</gene>
<evidence type="ECO:0000250" key="1"/>
<evidence type="ECO:0000255" key="2"/>
<evidence type="ECO:0000255" key="3">
    <source>
        <dbReference type="PROSITE-ProRule" id="PRU00695"/>
    </source>
</evidence>
<evidence type="ECO:0000256" key="4">
    <source>
        <dbReference type="SAM" id="MobiDB-lite"/>
    </source>
</evidence>
<evidence type="ECO:0000305" key="5"/>
<organism>
    <name type="scientific">Dictyostelium discoideum</name>
    <name type="common">Social amoeba</name>
    <dbReference type="NCBI Taxonomy" id="44689"/>
    <lineage>
        <taxon>Eukaryota</taxon>
        <taxon>Amoebozoa</taxon>
        <taxon>Evosea</taxon>
        <taxon>Eumycetozoa</taxon>
        <taxon>Dictyostelia</taxon>
        <taxon>Dictyosteliales</taxon>
        <taxon>Dictyosteliaceae</taxon>
        <taxon>Dictyostelium</taxon>
    </lineage>
</organism>
<name>IF5_DICDI</name>